<dbReference type="EMBL" id="AE017354">
    <property type="protein sequence ID" value="AAU28767.1"/>
    <property type="molecule type" value="Genomic_DNA"/>
</dbReference>
<dbReference type="RefSeq" id="YP_096714.1">
    <property type="nucleotide sequence ID" value="NC_002942.5"/>
</dbReference>
<dbReference type="SMR" id="Q5ZS10"/>
<dbReference type="STRING" id="272624.lpg2709"/>
<dbReference type="PaxDb" id="272624-lpg2709"/>
<dbReference type="KEGG" id="lpn:lpg2709"/>
<dbReference type="PATRIC" id="fig|272624.6.peg.2894"/>
<dbReference type="eggNOG" id="COG0776">
    <property type="taxonomic scope" value="Bacteria"/>
</dbReference>
<dbReference type="HOGENOM" id="CLU_105066_1_3_6"/>
<dbReference type="OrthoDB" id="9797747at2"/>
<dbReference type="Proteomes" id="UP000000609">
    <property type="component" value="Chromosome"/>
</dbReference>
<dbReference type="GO" id="GO:0005829">
    <property type="term" value="C:cytosol"/>
    <property type="evidence" value="ECO:0007669"/>
    <property type="project" value="TreeGrafter"/>
</dbReference>
<dbReference type="GO" id="GO:0003677">
    <property type="term" value="F:DNA binding"/>
    <property type="evidence" value="ECO:0007669"/>
    <property type="project" value="UniProtKB-UniRule"/>
</dbReference>
<dbReference type="GO" id="GO:0030527">
    <property type="term" value="F:structural constituent of chromatin"/>
    <property type="evidence" value="ECO:0007669"/>
    <property type="project" value="InterPro"/>
</dbReference>
<dbReference type="GO" id="GO:0006310">
    <property type="term" value="P:DNA recombination"/>
    <property type="evidence" value="ECO:0007669"/>
    <property type="project" value="UniProtKB-UniRule"/>
</dbReference>
<dbReference type="GO" id="GO:0009893">
    <property type="term" value="P:positive regulation of metabolic process"/>
    <property type="evidence" value="ECO:0007669"/>
    <property type="project" value="UniProtKB-ARBA"/>
</dbReference>
<dbReference type="GO" id="GO:0006355">
    <property type="term" value="P:regulation of DNA-templated transcription"/>
    <property type="evidence" value="ECO:0007669"/>
    <property type="project" value="UniProtKB-UniRule"/>
</dbReference>
<dbReference type="GO" id="GO:0006417">
    <property type="term" value="P:regulation of translation"/>
    <property type="evidence" value="ECO:0007669"/>
    <property type="project" value="UniProtKB-UniRule"/>
</dbReference>
<dbReference type="CDD" id="cd13835">
    <property type="entry name" value="IHF_A"/>
    <property type="match status" value="1"/>
</dbReference>
<dbReference type="FunFam" id="4.10.520.10:FF:000002">
    <property type="entry name" value="Integration host factor subunit alpha"/>
    <property type="match status" value="1"/>
</dbReference>
<dbReference type="Gene3D" id="4.10.520.10">
    <property type="entry name" value="IHF-like DNA-binding proteins"/>
    <property type="match status" value="1"/>
</dbReference>
<dbReference type="HAMAP" id="MF_00380">
    <property type="entry name" value="IHF_alpha"/>
    <property type="match status" value="1"/>
</dbReference>
<dbReference type="InterPro" id="IPR000119">
    <property type="entry name" value="Hist_DNA-bd"/>
</dbReference>
<dbReference type="InterPro" id="IPR020816">
    <property type="entry name" value="Histone-like_DNA-bd_CS"/>
</dbReference>
<dbReference type="InterPro" id="IPR010992">
    <property type="entry name" value="IHF-like_DNA-bd_dom_sf"/>
</dbReference>
<dbReference type="InterPro" id="IPR005684">
    <property type="entry name" value="IHF_alpha"/>
</dbReference>
<dbReference type="NCBIfam" id="TIGR00987">
    <property type="entry name" value="himA"/>
    <property type="match status" value="1"/>
</dbReference>
<dbReference type="NCBIfam" id="NF001401">
    <property type="entry name" value="PRK00285.1"/>
    <property type="match status" value="1"/>
</dbReference>
<dbReference type="PANTHER" id="PTHR33175">
    <property type="entry name" value="DNA-BINDING PROTEIN HU"/>
    <property type="match status" value="1"/>
</dbReference>
<dbReference type="PANTHER" id="PTHR33175:SF2">
    <property type="entry name" value="INTEGRATION HOST FACTOR SUBUNIT ALPHA"/>
    <property type="match status" value="1"/>
</dbReference>
<dbReference type="Pfam" id="PF00216">
    <property type="entry name" value="Bac_DNA_binding"/>
    <property type="match status" value="1"/>
</dbReference>
<dbReference type="PRINTS" id="PR01727">
    <property type="entry name" value="DNABINDINGHU"/>
</dbReference>
<dbReference type="SMART" id="SM00411">
    <property type="entry name" value="BHL"/>
    <property type="match status" value="1"/>
</dbReference>
<dbReference type="SUPFAM" id="SSF47729">
    <property type="entry name" value="IHF-like DNA-binding proteins"/>
    <property type="match status" value="1"/>
</dbReference>
<dbReference type="PROSITE" id="PS00045">
    <property type="entry name" value="HISTONE_LIKE"/>
    <property type="match status" value="1"/>
</dbReference>
<evidence type="ECO:0000255" key="1">
    <source>
        <dbReference type="HAMAP-Rule" id="MF_00380"/>
    </source>
</evidence>
<evidence type="ECO:0000256" key="2">
    <source>
        <dbReference type="SAM" id="MobiDB-lite"/>
    </source>
</evidence>
<gene>
    <name evidence="1" type="primary">ihfA</name>
    <name evidence="1" type="synonym">himA</name>
    <name type="ordered locus">lpg2709</name>
</gene>
<feature type="chain" id="PRO_0000277739" description="Integration host factor subunit alpha">
    <location>
        <begin position="1"/>
        <end position="99"/>
    </location>
</feature>
<feature type="region of interest" description="Disordered" evidence="2">
    <location>
        <begin position="52"/>
        <end position="73"/>
    </location>
</feature>
<comment type="function">
    <text evidence="1">This protein is one of the two subunits of integration host factor, a specific DNA-binding protein that functions in genetic recombination as well as in transcriptional and translational control.</text>
</comment>
<comment type="subunit">
    <text evidence="1">Heterodimer of an alpha and a beta chain.</text>
</comment>
<comment type="similarity">
    <text evidence="1">Belongs to the bacterial histone-like protein family.</text>
</comment>
<accession>Q5ZS10</accession>
<reference key="1">
    <citation type="journal article" date="2004" name="Science">
        <title>The genomic sequence of the accidental pathogen Legionella pneumophila.</title>
        <authorList>
            <person name="Chien M."/>
            <person name="Morozova I."/>
            <person name="Shi S."/>
            <person name="Sheng H."/>
            <person name="Chen J."/>
            <person name="Gomez S.M."/>
            <person name="Asamani G."/>
            <person name="Hill K."/>
            <person name="Nuara J."/>
            <person name="Feder M."/>
            <person name="Rineer J."/>
            <person name="Greenberg J.J."/>
            <person name="Steshenko V."/>
            <person name="Park S.H."/>
            <person name="Zhao B."/>
            <person name="Teplitskaya E."/>
            <person name="Edwards J.R."/>
            <person name="Pampou S."/>
            <person name="Georghiou A."/>
            <person name="Chou I.-C."/>
            <person name="Iannuccilli W."/>
            <person name="Ulz M.E."/>
            <person name="Kim D.H."/>
            <person name="Geringer-Sameth A."/>
            <person name="Goldsberry C."/>
            <person name="Morozov P."/>
            <person name="Fischer S.G."/>
            <person name="Segal G."/>
            <person name="Qu X."/>
            <person name="Rzhetsky A."/>
            <person name="Zhang P."/>
            <person name="Cayanis E."/>
            <person name="De Jong P.J."/>
            <person name="Ju J."/>
            <person name="Kalachikov S."/>
            <person name="Shuman H.A."/>
            <person name="Russo J.J."/>
        </authorList>
    </citation>
    <scope>NUCLEOTIDE SEQUENCE [LARGE SCALE GENOMIC DNA]</scope>
    <source>
        <strain>Philadelphia 1 / ATCC 33152 / DSM 7513</strain>
    </source>
</reference>
<proteinExistence type="inferred from homology"/>
<organism>
    <name type="scientific">Legionella pneumophila subsp. pneumophila (strain Philadelphia 1 / ATCC 33152 / DSM 7513)</name>
    <dbReference type="NCBI Taxonomy" id="272624"/>
    <lineage>
        <taxon>Bacteria</taxon>
        <taxon>Pseudomonadati</taxon>
        <taxon>Pseudomonadota</taxon>
        <taxon>Gammaproteobacteria</taxon>
        <taxon>Legionellales</taxon>
        <taxon>Legionellaceae</taxon>
        <taxon>Legionella</taxon>
    </lineage>
</organism>
<name>IHFA_LEGPH</name>
<keyword id="KW-0233">DNA recombination</keyword>
<keyword id="KW-0238">DNA-binding</keyword>
<keyword id="KW-1185">Reference proteome</keyword>
<keyword id="KW-0804">Transcription</keyword>
<keyword id="KW-0805">Transcription regulation</keyword>
<keyword id="KW-0810">Translation regulation</keyword>
<protein>
    <recommendedName>
        <fullName evidence="1">Integration host factor subunit alpha</fullName>
        <shortName evidence="1">IHF-alpha</shortName>
    </recommendedName>
</protein>
<sequence>MIVNALSKAIMAETLCDELKLNKPVAKEMVENFFEELRHALENGQHVKLSGFGNFTLRDKPQRPGRNPKTGEEIPVEARRVVTFKPGLKLKTKIEKIGK</sequence>